<dbReference type="EC" id="2.1.1.45" evidence="1"/>
<dbReference type="EMBL" id="CP000304">
    <property type="protein sequence ID" value="ABP78120.1"/>
    <property type="status" value="ALT_INIT"/>
    <property type="molecule type" value="Genomic_DNA"/>
</dbReference>
<dbReference type="RefSeq" id="WP_014595629.1">
    <property type="nucleotide sequence ID" value="NC_009434.1"/>
</dbReference>
<dbReference type="SMR" id="A4VGL9"/>
<dbReference type="KEGG" id="psa:PST_0414"/>
<dbReference type="eggNOG" id="COG0207">
    <property type="taxonomic scope" value="Bacteria"/>
</dbReference>
<dbReference type="HOGENOM" id="CLU_021669_0_0_6"/>
<dbReference type="UniPathway" id="UPA00575"/>
<dbReference type="Proteomes" id="UP000000233">
    <property type="component" value="Chromosome"/>
</dbReference>
<dbReference type="GO" id="GO:0005829">
    <property type="term" value="C:cytosol"/>
    <property type="evidence" value="ECO:0007669"/>
    <property type="project" value="TreeGrafter"/>
</dbReference>
<dbReference type="GO" id="GO:0004799">
    <property type="term" value="F:thymidylate synthase activity"/>
    <property type="evidence" value="ECO:0007669"/>
    <property type="project" value="UniProtKB-UniRule"/>
</dbReference>
<dbReference type="GO" id="GO:0006231">
    <property type="term" value="P:dTMP biosynthetic process"/>
    <property type="evidence" value="ECO:0007669"/>
    <property type="project" value="UniProtKB-UniRule"/>
</dbReference>
<dbReference type="GO" id="GO:0006235">
    <property type="term" value="P:dTTP biosynthetic process"/>
    <property type="evidence" value="ECO:0007669"/>
    <property type="project" value="UniProtKB-UniRule"/>
</dbReference>
<dbReference type="GO" id="GO:0032259">
    <property type="term" value="P:methylation"/>
    <property type="evidence" value="ECO:0007669"/>
    <property type="project" value="UniProtKB-KW"/>
</dbReference>
<dbReference type="CDD" id="cd00351">
    <property type="entry name" value="TS_Pyrimidine_HMase"/>
    <property type="match status" value="1"/>
</dbReference>
<dbReference type="FunFam" id="3.30.572.10:FF:000001">
    <property type="entry name" value="Thymidylate synthase"/>
    <property type="match status" value="1"/>
</dbReference>
<dbReference type="Gene3D" id="3.30.572.10">
    <property type="entry name" value="Thymidylate synthase/dCMP hydroxymethylase domain"/>
    <property type="match status" value="1"/>
</dbReference>
<dbReference type="HAMAP" id="MF_00008">
    <property type="entry name" value="Thymidy_synth_bact"/>
    <property type="match status" value="1"/>
</dbReference>
<dbReference type="InterPro" id="IPR045097">
    <property type="entry name" value="Thymidate_synth/dCMP_Mease"/>
</dbReference>
<dbReference type="InterPro" id="IPR023451">
    <property type="entry name" value="Thymidate_synth/dCMP_Mease_dom"/>
</dbReference>
<dbReference type="InterPro" id="IPR036926">
    <property type="entry name" value="Thymidate_synth/dCMP_Mease_sf"/>
</dbReference>
<dbReference type="InterPro" id="IPR000398">
    <property type="entry name" value="Thymidylate_synthase"/>
</dbReference>
<dbReference type="InterPro" id="IPR020940">
    <property type="entry name" value="Thymidylate_synthase_AS"/>
</dbReference>
<dbReference type="NCBIfam" id="NF002497">
    <property type="entry name" value="PRK01827.1-3"/>
    <property type="match status" value="1"/>
</dbReference>
<dbReference type="NCBIfam" id="NF002499">
    <property type="entry name" value="PRK01827.1-5"/>
    <property type="match status" value="1"/>
</dbReference>
<dbReference type="NCBIfam" id="TIGR03284">
    <property type="entry name" value="thym_sym"/>
    <property type="match status" value="2"/>
</dbReference>
<dbReference type="PANTHER" id="PTHR11548:SF9">
    <property type="entry name" value="THYMIDYLATE SYNTHASE"/>
    <property type="match status" value="1"/>
</dbReference>
<dbReference type="PANTHER" id="PTHR11548">
    <property type="entry name" value="THYMIDYLATE SYNTHASE 1"/>
    <property type="match status" value="1"/>
</dbReference>
<dbReference type="Pfam" id="PF00303">
    <property type="entry name" value="Thymidylat_synt"/>
    <property type="match status" value="1"/>
</dbReference>
<dbReference type="PRINTS" id="PR00108">
    <property type="entry name" value="THYMDSNTHASE"/>
</dbReference>
<dbReference type="SUPFAM" id="SSF55831">
    <property type="entry name" value="Thymidylate synthase/dCMP hydroxymethylase"/>
    <property type="match status" value="1"/>
</dbReference>
<dbReference type="PROSITE" id="PS00091">
    <property type="entry name" value="THYMIDYLATE_SYNTHASE"/>
    <property type="match status" value="1"/>
</dbReference>
<keyword id="KW-0963">Cytoplasm</keyword>
<keyword id="KW-0489">Methyltransferase</keyword>
<keyword id="KW-0545">Nucleotide biosynthesis</keyword>
<keyword id="KW-1185">Reference proteome</keyword>
<keyword id="KW-0808">Transferase</keyword>
<accession>A4VGL9</accession>
<feature type="chain" id="PRO_0000321474" description="Thymidylate synthase">
    <location>
        <begin position="1"/>
        <end position="264"/>
    </location>
</feature>
<feature type="active site" description="Nucleophile" evidence="1">
    <location>
        <position position="146"/>
    </location>
</feature>
<feature type="binding site" description="in other chain" evidence="1">
    <location>
        <position position="21"/>
    </location>
    <ligand>
        <name>dUMP</name>
        <dbReference type="ChEBI" id="CHEBI:246422"/>
        <note>ligand shared between dimeric partners</note>
    </ligand>
</feature>
<feature type="binding site" evidence="1">
    <location>
        <position position="51"/>
    </location>
    <ligand>
        <name>(6R)-5,10-methylene-5,6,7,8-tetrahydrofolate</name>
        <dbReference type="ChEBI" id="CHEBI:15636"/>
    </ligand>
</feature>
<feature type="binding site" evidence="1">
    <location>
        <begin position="126"/>
        <end position="127"/>
    </location>
    <ligand>
        <name>dUMP</name>
        <dbReference type="ChEBI" id="CHEBI:246422"/>
        <note>ligand shared between dimeric partners</note>
    </ligand>
</feature>
<feature type="binding site" description="in other chain" evidence="1">
    <location>
        <begin position="166"/>
        <end position="169"/>
    </location>
    <ligand>
        <name>dUMP</name>
        <dbReference type="ChEBI" id="CHEBI:246422"/>
        <note>ligand shared between dimeric partners</note>
    </ligand>
</feature>
<feature type="binding site" evidence="1">
    <location>
        <position position="169"/>
    </location>
    <ligand>
        <name>(6R)-5,10-methylene-5,6,7,8-tetrahydrofolate</name>
        <dbReference type="ChEBI" id="CHEBI:15636"/>
    </ligand>
</feature>
<feature type="binding site" description="in other chain" evidence="1">
    <location>
        <position position="177"/>
    </location>
    <ligand>
        <name>dUMP</name>
        <dbReference type="ChEBI" id="CHEBI:246422"/>
        <note>ligand shared between dimeric partners</note>
    </ligand>
</feature>
<feature type="binding site" description="in other chain" evidence="1">
    <location>
        <begin position="207"/>
        <end position="209"/>
    </location>
    <ligand>
        <name>dUMP</name>
        <dbReference type="ChEBI" id="CHEBI:246422"/>
        <note>ligand shared between dimeric partners</note>
    </ligand>
</feature>
<feature type="binding site" evidence="1">
    <location>
        <position position="263"/>
    </location>
    <ligand>
        <name>(6R)-5,10-methylene-5,6,7,8-tetrahydrofolate</name>
        <dbReference type="ChEBI" id="CHEBI:15636"/>
    </ligand>
</feature>
<protein>
    <recommendedName>
        <fullName evidence="1">Thymidylate synthase</fullName>
        <shortName evidence="1">TS</shortName>
        <shortName evidence="1">TSase</shortName>
        <ecNumber evidence="1">2.1.1.45</ecNumber>
    </recommendedName>
</protein>
<proteinExistence type="inferred from homology"/>
<reference key="1">
    <citation type="journal article" date="2008" name="Proc. Natl. Acad. Sci. U.S.A.">
        <title>Nitrogen fixation island and rhizosphere competence traits in the genome of root-associated Pseudomonas stutzeri A1501.</title>
        <authorList>
            <person name="Yan Y."/>
            <person name="Yang J."/>
            <person name="Dou Y."/>
            <person name="Chen M."/>
            <person name="Ping S."/>
            <person name="Peng J."/>
            <person name="Lu W."/>
            <person name="Zhang W."/>
            <person name="Yao Z."/>
            <person name="Li H."/>
            <person name="Liu W."/>
            <person name="He S."/>
            <person name="Geng L."/>
            <person name="Zhang X."/>
            <person name="Yang F."/>
            <person name="Yu H."/>
            <person name="Zhan Y."/>
            <person name="Li D."/>
            <person name="Lin Z."/>
            <person name="Wang Y."/>
            <person name="Elmerich C."/>
            <person name="Lin M."/>
            <person name="Jin Q."/>
        </authorList>
    </citation>
    <scope>NUCLEOTIDE SEQUENCE [LARGE SCALE GENOMIC DNA]</scope>
    <source>
        <strain>A1501</strain>
    </source>
</reference>
<organism>
    <name type="scientific">Stutzerimonas stutzeri (strain A1501)</name>
    <name type="common">Pseudomonas stutzeri</name>
    <dbReference type="NCBI Taxonomy" id="379731"/>
    <lineage>
        <taxon>Bacteria</taxon>
        <taxon>Pseudomonadati</taxon>
        <taxon>Pseudomonadota</taxon>
        <taxon>Gammaproteobacteria</taxon>
        <taxon>Pseudomonadales</taxon>
        <taxon>Pseudomonadaceae</taxon>
        <taxon>Stutzerimonas</taxon>
    </lineage>
</organism>
<comment type="function">
    <text evidence="1">Catalyzes the reductive methylation of 2'-deoxyuridine-5'-monophosphate (dUMP) to 2'-deoxythymidine-5'-monophosphate (dTMP) while utilizing 5,10-methylenetetrahydrofolate (mTHF) as the methyl donor and reductant in the reaction, yielding dihydrofolate (DHF) as a by-product. This enzymatic reaction provides an intracellular de novo source of dTMP, an essential precursor for DNA biosynthesis.</text>
</comment>
<comment type="catalytic activity">
    <reaction evidence="1">
        <text>dUMP + (6R)-5,10-methylene-5,6,7,8-tetrahydrofolate = 7,8-dihydrofolate + dTMP</text>
        <dbReference type="Rhea" id="RHEA:12104"/>
        <dbReference type="ChEBI" id="CHEBI:15636"/>
        <dbReference type="ChEBI" id="CHEBI:57451"/>
        <dbReference type="ChEBI" id="CHEBI:63528"/>
        <dbReference type="ChEBI" id="CHEBI:246422"/>
        <dbReference type="EC" id="2.1.1.45"/>
    </reaction>
</comment>
<comment type="pathway">
    <text evidence="1">Pyrimidine metabolism; dTTP biosynthesis.</text>
</comment>
<comment type="subunit">
    <text evidence="1">Homodimer.</text>
</comment>
<comment type="subcellular location">
    <subcellularLocation>
        <location evidence="1">Cytoplasm</location>
    </subcellularLocation>
</comment>
<comment type="similarity">
    <text evidence="1">Belongs to the thymidylate synthase family. Bacterial-type ThyA subfamily.</text>
</comment>
<comment type="sequence caution" evidence="2">
    <conflict type="erroneous initiation">
        <sequence resource="EMBL-CDS" id="ABP78120"/>
    </conflict>
</comment>
<name>TYSY_STUS1</name>
<gene>
    <name evidence="1" type="primary">thyA</name>
    <name type="ordered locus">PST_0414</name>
</gene>
<sequence length="264" mass="30210">MKQYLDLMRHVREHGTFKSDRTGTGTYSVFGYQMRFDLAEGFPLVTTKKCHLKSIIHELLWFLQGDTNIKYLKENGVRIWDEWADENGELGPVYGYQWRSWPAPNGESIDQIANLLAMIKKNPDSRRLIVSAWNPALVEQMALPPCHALFQFYVADGKLSCQLYQRSADIFLGVPFNIASYALLTLMVAQVCDLEPGEFIWSGGDCHLYANHLEQADLQLTREPLPLPTMKLNPEVKDLFAFRFEDFELVGYEAHPHIKAPVAV</sequence>
<evidence type="ECO:0000255" key="1">
    <source>
        <dbReference type="HAMAP-Rule" id="MF_00008"/>
    </source>
</evidence>
<evidence type="ECO:0000305" key="2"/>